<proteinExistence type="evidence at protein level"/>
<evidence type="ECO:0000250" key="1">
    <source>
        <dbReference type="UniProtKB" id="Q93WL3"/>
    </source>
</evidence>
<evidence type="ECO:0000256" key="2">
    <source>
        <dbReference type="SAM" id="MobiDB-lite"/>
    </source>
</evidence>
<evidence type="ECO:0000269" key="3">
    <source>
    </source>
</evidence>
<evidence type="ECO:0000303" key="4">
    <source>
    </source>
</evidence>
<evidence type="ECO:0000305" key="5"/>
<evidence type="ECO:0000312" key="6">
    <source>
        <dbReference type="EMBL" id="EDP01528.1"/>
    </source>
</evidence>
<evidence type="ECO:0000312" key="7">
    <source>
        <dbReference type="EMBL" id="PNW84426.1"/>
    </source>
</evidence>
<evidence type="ECO:0007829" key="8">
    <source>
        <dbReference type="PDB" id="7EKO"/>
    </source>
</evidence>
<accession>A8J353</accession>
<sequence>MQALQASRLTGQARPCSSSVVPRCSSLHVSRPISSGVSSSQELSSRSSAPATKSWRSSGRVITRATATAAPSELDDVGVSAAAESIIQYAINFARASETYEVHSWMVLMGILKYETCTAAKILKSLGLEDLYGAWNEVLWALNVCDGLQPRSFVTDIKFADRAFKVITAASDFAVWHGKDKMYSEDVLMALAAGGVLEDLFPDLNLSFERVRKAVEKESGRRYQLPDETEEAGPLKSEDDVSFL</sequence>
<reference key="1">
    <citation type="journal article" date="2007" name="Science">
        <title>The Chlamydomonas genome reveals the evolution of key animal and plant functions.</title>
        <authorList>
            <person name="Merchant S.S."/>
            <person name="Prochnik S.E."/>
            <person name="Vallon O."/>
            <person name="Harris E.H."/>
            <person name="Karpowicz S.J."/>
            <person name="Witman G.B."/>
            <person name="Terry A."/>
            <person name="Salamov A."/>
            <person name="Fritz-Laylin L.K."/>
            <person name="Marechal-Drouard L."/>
            <person name="Marshall W.F."/>
            <person name="Qu L.H."/>
            <person name="Nelson D.R."/>
            <person name="Sanderfoot A.A."/>
            <person name="Spalding M.H."/>
            <person name="Kapitonov V.V."/>
            <person name="Ren Q."/>
            <person name="Ferris P."/>
            <person name="Lindquist E."/>
            <person name="Shapiro H."/>
            <person name="Lucas S.M."/>
            <person name="Grimwood J."/>
            <person name="Schmutz J."/>
            <person name="Cardol P."/>
            <person name="Cerutti H."/>
            <person name="Chanfreau G."/>
            <person name="Chen C.L."/>
            <person name="Cognat V."/>
            <person name="Croft M.T."/>
            <person name="Dent R."/>
            <person name="Dutcher S."/>
            <person name="Fernandez E."/>
            <person name="Fukuzawa H."/>
            <person name="Gonzalez-Ballester D."/>
            <person name="Gonzalez-Halphen D."/>
            <person name="Hallmann A."/>
            <person name="Hanikenne M."/>
            <person name="Hippler M."/>
            <person name="Inwood W."/>
            <person name="Jabbari K."/>
            <person name="Kalanon M."/>
            <person name="Kuras R."/>
            <person name="Lefebvre P.A."/>
            <person name="Lemaire S.D."/>
            <person name="Lobanov A.V."/>
            <person name="Lohr M."/>
            <person name="Manuell A."/>
            <person name="Meier I."/>
            <person name="Mets L."/>
            <person name="Mittag M."/>
            <person name="Mittelmeier T."/>
            <person name="Moroney J.V."/>
            <person name="Moseley J."/>
            <person name="Napoli C."/>
            <person name="Nedelcu A.M."/>
            <person name="Niyogi K."/>
            <person name="Novoselov S.V."/>
            <person name="Paulsen I.T."/>
            <person name="Pazour G.J."/>
            <person name="Purton S."/>
            <person name="Ral J.P."/>
            <person name="Riano-Pachon D.M."/>
            <person name="Riekhof W."/>
            <person name="Rymarquis L."/>
            <person name="Schroda M."/>
            <person name="Stern D."/>
            <person name="Umen J."/>
            <person name="Willows R."/>
            <person name="Wilson N."/>
            <person name="Zimmer S.L."/>
            <person name="Allmer J."/>
            <person name="Balk J."/>
            <person name="Bisova K."/>
            <person name="Chen C.J."/>
            <person name="Elias M."/>
            <person name="Gendler K."/>
            <person name="Hauser C."/>
            <person name="Lamb M.R."/>
            <person name="Ledford H."/>
            <person name="Long J.C."/>
            <person name="Minagawa J."/>
            <person name="Page M.D."/>
            <person name="Pan J."/>
            <person name="Pootakham W."/>
            <person name="Roje S."/>
            <person name="Rose A."/>
            <person name="Stahlberg E."/>
            <person name="Terauchi A.M."/>
            <person name="Yang P."/>
            <person name="Ball S."/>
            <person name="Bowler C."/>
            <person name="Dieckmann C.L."/>
            <person name="Gladyshev V.N."/>
            <person name="Green P."/>
            <person name="Jorgensen R."/>
            <person name="Mayfield S."/>
            <person name="Mueller-Roeber B."/>
            <person name="Rajamani S."/>
            <person name="Sayre R.T."/>
            <person name="Brokstein P."/>
            <person name="Dubchak I."/>
            <person name="Goodstein D."/>
            <person name="Hornick L."/>
            <person name="Huang Y.W."/>
            <person name="Jhaveri J."/>
            <person name="Luo Y."/>
            <person name="Martinez D."/>
            <person name="Ngau W.C."/>
            <person name="Otillar B."/>
            <person name="Poliakov A."/>
            <person name="Porter A."/>
            <person name="Szajkowski L."/>
            <person name="Werner G."/>
            <person name="Zhou K."/>
            <person name="Grigoriev I.V."/>
            <person name="Rokhsar D.S."/>
            <person name="Grossman A.R."/>
        </authorList>
    </citation>
    <scope>NUCLEOTIDE SEQUENCE [LARGE SCALE GENOMIC DNA]</scope>
    <source>
        <strain>CC-503</strain>
    </source>
</reference>
<reference key="2">
    <citation type="submission" date="2017-07" db="EMBL/GenBank/DDBJ databases">
        <title>WGS assembly of Chlamydomonas reinhardtii.</title>
        <authorList>
            <consortium name="Chlamydomonas Annotation Team"/>
            <consortium name="JGI Annotation Team"/>
            <person name="Merchant S.S."/>
            <person name="Prochnik S.E."/>
            <person name="Vallon O."/>
            <person name="Harris E.H."/>
            <person name="Karpowicz S.J."/>
            <person name="Witman G.B."/>
            <person name="Terry A."/>
            <person name="Salamov A."/>
            <person name="Fritz-Laylin L.K."/>
            <person name="Marechal-Drouard L."/>
            <person name="Marshall W.F."/>
            <person name="Qu L.H."/>
            <person name="Nelson D.R."/>
            <person name="Sanderfoot A.A."/>
            <person name="Spalding M.H."/>
            <person name="Kapitonov V.V."/>
            <person name="Ren Q."/>
            <person name="Ferris P."/>
            <person name="Lindquist E."/>
            <person name="Shapiro H."/>
            <person name="Lucas S.M."/>
            <person name="Grimwood J."/>
            <person name="Schmutz J."/>
            <person name="Grigoriev I.V."/>
            <person name="Rokhsar D.S."/>
        </authorList>
    </citation>
    <scope>GENOME REANNOTATION</scope>
    <source>
        <strain>CC-503</strain>
    </source>
</reference>
<reference key="3">
    <citation type="journal article" date="2012" name="Plant Mol. Biol.">
        <title>The purification of the Chlamydomonas reinhardtii chloroplast ClpP complex: additional subunits and structural features.</title>
        <authorList>
            <person name="Derrien B."/>
            <person name="Majeran W."/>
            <person name="Effantin G."/>
            <person name="Ebenezer J."/>
            <person name="Friso G."/>
            <person name="van Wijk K.J."/>
            <person name="Steven A.C."/>
            <person name="Maurizi M.R."/>
            <person name="Vallon O."/>
        </authorList>
    </citation>
    <scope>PROTEIN SEQUENCE OF 65-71</scope>
    <scope>IDENTIFICATION BY MASS SPECTROMETRY</scope>
</reference>
<organism>
    <name type="scientific">Chlamydomonas reinhardtii</name>
    <name type="common">Chlamydomonas smithii</name>
    <dbReference type="NCBI Taxonomy" id="3055"/>
    <lineage>
        <taxon>Eukaryota</taxon>
        <taxon>Viridiplantae</taxon>
        <taxon>Chlorophyta</taxon>
        <taxon>core chlorophytes</taxon>
        <taxon>Chlorophyceae</taxon>
        <taxon>CS clade</taxon>
        <taxon>Chlamydomonadales</taxon>
        <taxon>Chlamydomonadaceae</taxon>
        <taxon>Chlamydomonas</taxon>
    </lineage>
</organism>
<keyword id="KW-0002">3D-structure</keyword>
<keyword id="KW-0150">Chloroplast</keyword>
<keyword id="KW-0903">Direct protein sequencing</keyword>
<keyword id="KW-0934">Plastid</keyword>
<keyword id="KW-1185">Reference proteome</keyword>
<keyword id="KW-0809">Transit peptide</keyword>
<feature type="transit peptide" description="Chloroplast" evidence="3">
    <location>
        <begin position="1"/>
        <end position="64"/>
    </location>
</feature>
<feature type="chain" id="PRO_0000450659" description="ATP-dependent Clp protease ATP-binding subunit CLPT4, chloroplastic">
    <location>
        <begin position="65"/>
        <end position="244"/>
    </location>
</feature>
<feature type="region of interest" description="Disordered" evidence="2">
    <location>
        <begin position="30"/>
        <end position="55"/>
    </location>
</feature>
<feature type="region of interest" description="Disordered" evidence="2">
    <location>
        <begin position="220"/>
        <end position="244"/>
    </location>
</feature>
<feature type="compositionally biased region" description="Low complexity" evidence="2">
    <location>
        <begin position="30"/>
        <end position="48"/>
    </location>
</feature>
<feature type="helix" evidence="8">
    <location>
        <begin position="66"/>
        <end position="68"/>
    </location>
</feature>
<feature type="strand" evidence="8">
    <location>
        <begin position="69"/>
        <end position="71"/>
    </location>
</feature>
<feature type="helix" evidence="8">
    <location>
        <begin position="72"/>
        <end position="75"/>
    </location>
</feature>
<feature type="helix" evidence="8">
    <location>
        <begin position="81"/>
        <end position="96"/>
    </location>
</feature>
<feature type="helix" evidence="8">
    <location>
        <begin position="104"/>
        <end position="113"/>
    </location>
</feature>
<feature type="helix" evidence="8">
    <location>
        <begin position="118"/>
        <end position="126"/>
    </location>
</feature>
<feature type="helix" evidence="8">
    <location>
        <begin position="131"/>
        <end position="143"/>
    </location>
</feature>
<feature type="helix" evidence="8">
    <location>
        <begin position="161"/>
        <end position="176"/>
    </location>
</feature>
<feature type="strand" evidence="8">
    <location>
        <begin position="180"/>
        <end position="182"/>
    </location>
</feature>
<feature type="helix" evidence="8">
    <location>
        <begin position="184"/>
        <end position="192"/>
    </location>
</feature>
<feature type="turn" evidence="8">
    <location>
        <begin position="193"/>
        <end position="200"/>
    </location>
</feature>
<feature type="helix" evidence="8">
    <location>
        <begin position="202"/>
        <end position="204"/>
    </location>
</feature>
<feature type="helix" evidence="8">
    <location>
        <begin position="208"/>
        <end position="219"/>
    </location>
</feature>
<gene>
    <name evidence="4" type="primary">CLPT4</name>
    <name evidence="7" type="ORF">CHLRE_03g144667v5</name>
    <name evidence="6" type="ORF">CHLREDRAFT_175283</name>
</gene>
<dbReference type="EMBL" id="DS496134">
    <property type="protein sequence ID" value="EDP01528.1"/>
    <property type="molecule type" value="Genomic_DNA"/>
</dbReference>
<dbReference type="EMBL" id="CM008964">
    <property type="protein sequence ID" value="PNW84426.1"/>
    <property type="molecule type" value="Genomic_DNA"/>
</dbReference>
<dbReference type="RefSeq" id="XP_001695741.1">
    <property type="nucleotide sequence ID" value="XM_001695689.1"/>
</dbReference>
<dbReference type="PDB" id="7EKO">
    <property type="method" value="EM"/>
    <property type="resolution" value="3.30 A"/>
    <property type="chains" value="O=65-244"/>
</dbReference>
<dbReference type="PDB" id="7EKQ">
    <property type="method" value="EM"/>
    <property type="resolution" value="3.60 A"/>
    <property type="chains" value="O=65-244"/>
</dbReference>
<dbReference type="PDBsum" id="7EKO"/>
<dbReference type="PDBsum" id="7EKQ"/>
<dbReference type="EMDB" id="EMD-31171"/>
<dbReference type="EMDB" id="EMD-31173"/>
<dbReference type="SMR" id="A8J353"/>
<dbReference type="STRING" id="3055.A8J353"/>
<dbReference type="PaxDb" id="3055-EDP01528"/>
<dbReference type="ProMEX" id="A8J353"/>
<dbReference type="EnsemblPlants" id="PNW84426">
    <property type="protein sequence ID" value="PNW84426"/>
    <property type="gene ID" value="CHLRE_03g144667v5"/>
</dbReference>
<dbReference type="GeneID" id="5721295"/>
<dbReference type="Gramene" id="PNW84426">
    <property type="protein sequence ID" value="PNW84426"/>
    <property type="gene ID" value="CHLRE_03g144667v5"/>
</dbReference>
<dbReference type="KEGG" id="cre:CHLRE_03g144667v5"/>
<dbReference type="HOGENOM" id="CLU_1139429_0_0_1"/>
<dbReference type="InParanoid" id="A8J353"/>
<dbReference type="OMA" id="TYEVHSW"/>
<dbReference type="OrthoDB" id="531720at2759"/>
<dbReference type="Proteomes" id="UP000006906">
    <property type="component" value="Chromosome 3"/>
</dbReference>
<dbReference type="GO" id="GO:0009507">
    <property type="term" value="C:chloroplast"/>
    <property type="evidence" value="ECO:0007669"/>
    <property type="project" value="UniProtKB-SubCell"/>
</dbReference>
<dbReference type="Gene3D" id="1.10.1780.10">
    <property type="entry name" value="Clp, N-terminal domain"/>
    <property type="match status" value="2"/>
</dbReference>
<dbReference type="InterPro" id="IPR036628">
    <property type="entry name" value="Clp_N_dom_sf"/>
</dbReference>
<dbReference type="SUPFAM" id="SSF81923">
    <property type="entry name" value="Double Clp-N motif"/>
    <property type="match status" value="1"/>
</dbReference>
<name>CLPT4_CHLRE</name>
<protein>
    <recommendedName>
        <fullName evidence="5">ATP-dependent Clp protease ATP-binding subunit CLPT4, chloroplastic</fullName>
    </recommendedName>
</protein>
<comment type="function">
    <text evidence="1">Accessory protein regulating the assembly of the plastid Clp protease system.</text>
</comment>
<comment type="subcellular location">
    <subcellularLocation>
        <location evidence="1">Plastid</location>
        <location evidence="1">Chloroplast</location>
    </subcellularLocation>
</comment>
<comment type="similarity">
    <text evidence="5">Belongs to the ClpA/ClpB family.</text>
</comment>